<reference key="1">
    <citation type="journal article" date="2005" name="Genome Biol.">
        <title>Full-length cDNAs from chicken bursal lymphocytes to facilitate gene function analysis.</title>
        <authorList>
            <person name="Caldwell R.B."/>
            <person name="Kierzek A.M."/>
            <person name="Arakawa H."/>
            <person name="Bezzubov Y."/>
            <person name="Zaim J."/>
            <person name="Fiedler P."/>
            <person name="Kutter S."/>
            <person name="Blagodatski A."/>
            <person name="Kostovska D."/>
            <person name="Koter M."/>
            <person name="Plachy J."/>
            <person name="Carninci P."/>
            <person name="Hayashizaki Y."/>
            <person name="Buerstedde J.-M."/>
        </authorList>
    </citation>
    <scope>NUCLEOTIDE SEQUENCE [LARGE SCALE MRNA]</scope>
    <source>
        <strain>CB</strain>
        <tissue>Bursa of Fabricius</tissue>
    </source>
</reference>
<feature type="chain" id="PRO_0000250745" description="Cysteine--tRNA ligase, cytoplasmic">
    <location>
        <begin position="1"/>
        <end position="748"/>
    </location>
</feature>
<feature type="region of interest" description="Disordered" evidence="4">
    <location>
        <begin position="1"/>
        <end position="25"/>
    </location>
</feature>
<feature type="region of interest" description="Disordered" evidence="4">
    <location>
        <begin position="656"/>
        <end position="719"/>
    </location>
</feature>
<feature type="short sequence motif" description="'HIGH' region">
    <location>
        <begin position="57"/>
        <end position="67"/>
    </location>
</feature>
<feature type="short sequence motif" description="'KIIK' region">
    <location>
        <begin position="101"/>
        <end position="104"/>
    </location>
</feature>
<feature type="short sequence motif" description="'KMSKS' region">
    <location>
        <begin position="406"/>
        <end position="410"/>
    </location>
</feature>
<feature type="compositionally biased region" description="Basic and acidic residues" evidence="4">
    <location>
        <begin position="656"/>
        <end position="679"/>
    </location>
</feature>
<feature type="compositionally biased region" description="Basic and acidic residues" evidence="4">
    <location>
        <begin position="686"/>
        <end position="717"/>
    </location>
</feature>
<feature type="binding site" evidence="2">
    <location>
        <position position="55"/>
    </location>
    <ligand>
        <name>Zn(2+)</name>
        <dbReference type="ChEBI" id="CHEBI:29105"/>
    </ligand>
</feature>
<feature type="binding site" evidence="2">
    <location>
        <position position="56"/>
    </location>
    <ligand>
        <name>L-cysteine</name>
        <dbReference type="ChEBI" id="CHEBI:35235"/>
    </ligand>
</feature>
<feature type="binding site" evidence="2">
    <location>
        <position position="96"/>
    </location>
    <ligand>
        <name>L-cysteine</name>
        <dbReference type="ChEBI" id="CHEBI:35235"/>
    </ligand>
</feature>
<feature type="binding site" evidence="2">
    <location>
        <position position="348"/>
    </location>
    <ligand>
        <name>Zn(2+)</name>
        <dbReference type="ChEBI" id="CHEBI:29105"/>
    </ligand>
</feature>
<feature type="binding site" evidence="2">
    <location>
        <position position="373"/>
    </location>
    <ligand>
        <name>L-cysteine</name>
        <dbReference type="ChEBI" id="CHEBI:35235"/>
    </ligand>
</feature>
<feature type="binding site" evidence="2">
    <location>
        <position position="373"/>
    </location>
    <ligand>
        <name>Zn(2+)</name>
        <dbReference type="ChEBI" id="CHEBI:29105"/>
    </ligand>
</feature>
<feature type="binding site" evidence="2">
    <location>
        <position position="377"/>
    </location>
    <ligand>
        <name>Zn(2+)</name>
        <dbReference type="ChEBI" id="CHEBI:29105"/>
    </ligand>
</feature>
<feature type="binding site" evidence="1">
    <location>
        <position position="409"/>
    </location>
    <ligand>
        <name>ATP</name>
        <dbReference type="ChEBI" id="CHEBI:30616"/>
    </ligand>
</feature>
<accession>Q5F408</accession>
<comment type="function">
    <text evidence="3">Catalyzes the ATP-dependent ligation of cysteine to tRNA(Cys).</text>
</comment>
<comment type="catalytic activity">
    <reaction evidence="3">
        <text>tRNA(Cys) + L-cysteine + ATP = L-cysteinyl-tRNA(Cys) + AMP + diphosphate</text>
        <dbReference type="Rhea" id="RHEA:17773"/>
        <dbReference type="Rhea" id="RHEA-COMP:9661"/>
        <dbReference type="Rhea" id="RHEA-COMP:9679"/>
        <dbReference type="ChEBI" id="CHEBI:30616"/>
        <dbReference type="ChEBI" id="CHEBI:33019"/>
        <dbReference type="ChEBI" id="CHEBI:35235"/>
        <dbReference type="ChEBI" id="CHEBI:78442"/>
        <dbReference type="ChEBI" id="CHEBI:78517"/>
        <dbReference type="ChEBI" id="CHEBI:456215"/>
        <dbReference type="EC" id="6.1.1.16"/>
    </reaction>
    <physiologicalReaction direction="left-to-right" evidence="3">
        <dbReference type="Rhea" id="RHEA:17774"/>
    </physiologicalReaction>
</comment>
<comment type="cofactor">
    <cofactor evidence="2">
        <name>Zn(2+)</name>
        <dbReference type="ChEBI" id="CHEBI:29105"/>
    </cofactor>
    <text evidence="2">Binds 1 zinc ion per subunit.</text>
</comment>
<comment type="subunit">
    <text evidence="3">Homodimer.</text>
</comment>
<comment type="subcellular location">
    <subcellularLocation>
        <location evidence="3">Cytoplasm</location>
    </subcellularLocation>
</comment>
<comment type="similarity">
    <text evidence="5">Belongs to the class-I aminoacyl-tRNA synthetase family.</text>
</comment>
<dbReference type="EC" id="6.1.1.16" evidence="3"/>
<dbReference type="EMBL" id="AJ851492">
    <property type="protein sequence ID" value="CAH65126.1"/>
    <property type="molecule type" value="mRNA"/>
</dbReference>
<dbReference type="RefSeq" id="NP_001012601.1">
    <property type="nucleotide sequence ID" value="NM_001012583.1"/>
</dbReference>
<dbReference type="SMR" id="Q5F408"/>
<dbReference type="FunCoup" id="Q5F408">
    <property type="interactions" value="2806"/>
</dbReference>
<dbReference type="STRING" id="9031.ENSGALP00000073222"/>
<dbReference type="PaxDb" id="9031-ENSGALP00000010361"/>
<dbReference type="GeneID" id="423086"/>
<dbReference type="KEGG" id="gga:423086"/>
<dbReference type="CTD" id="423086"/>
<dbReference type="VEuPathDB" id="HostDB:geneid_423086"/>
<dbReference type="eggNOG" id="KOG2007">
    <property type="taxonomic scope" value="Eukaryota"/>
</dbReference>
<dbReference type="HOGENOM" id="CLU_013528_3_3_1"/>
<dbReference type="InParanoid" id="Q5F408"/>
<dbReference type="OMA" id="FHNDMKS"/>
<dbReference type="OrthoDB" id="438179at2759"/>
<dbReference type="PhylomeDB" id="Q5F408"/>
<dbReference type="PRO" id="PR:Q5F408"/>
<dbReference type="Proteomes" id="UP000000539">
    <property type="component" value="Chromosome 5"/>
</dbReference>
<dbReference type="Bgee" id="ENSGALG00000006427">
    <property type="expression patterns" value="Expressed in spermatid and 14 other cell types or tissues"/>
</dbReference>
<dbReference type="GO" id="GO:0005737">
    <property type="term" value="C:cytoplasm"/>
    <property type="evidence" value="ECO:0000250"/>
    <property type="project" value="UniProtKB"/>
</dbReference>
<dbReference type="GO" id="GO:0005524">
    <property type="term" value="F:ATP binding"/>
    <property type="evidence" value="ECO:0000318"/>
    <property type="project" value="GO_Central"/>
</dbReference>
<dbReference type="GO" id="GO:0004817">
    <property type="term" value="F:cysteine-tRNA ligase activity"/>
    <property type="evidence" value="ECO:0000250"/>
    <property type="project" value="UniProtKB"/>
</dbReference>
<dbReference type="GO" id="GO:0046872">
    <property type="term" value="F:metal ion binding"/>
    <property type="evidence" value="ECO:0007669"/>
    <property type="project" value="UniProtKB-KW"/>
</dbReference>
<dbReference type="GO" id="GO:0000049">
    <property type="term" value="F:tRNA binding"/>
    <property type="evidence" value="ECO:0000250"/>
    <property type="project" value="UniProtKB"/>
</dbReference>
<dbReference type="GO" id="GO:0006423">
    <property type="term" value="P:cysteinyl-tRNA aminoacylation"/>
    <property type="evidence" value="ECO:0000250"/>
    <property type="project" value="UniProtKB"/>
</dbReference>
<dbReference type="CDD" id="cd00672">
    <property type="entry name" value="CysRS_core"/>
    <property type="match status" value="1"/>
</dbReference>
<dbReference type="Gene3D" id="3.40.50.620">
    <property type="entry name" value="HUPs"/>
    <property type="match status" value="1"/>
</dbReference>
<dbReference type="HAMAP" id="MF_00041">
    <property type="entry name" value="Cys_tRNA_synth"/>
    <property type="match status" value="1"/>
</dbReference>
<dbReference type="InterPro" id="IPR015803">
    <property type="entry name" value="Cys-tRNA-ligase"/>
</dbReference>
<dbReference type="InterPro" id="IPR024909">
    <property type="entry name" value="Cys-tRNA/MSH_ligase"/>
</dbReference>
<dbReference type="InterPro" id="IPR014729">
    <property type="entry name" value="Rossmann-like_a/b/a_fold"/>
</dbReference>
<dbReference type="InterPro" id="IPR032678">
    <property type="entry name" value="tRNA-synt_1_cat_dom"/>
</dbReference>
<dbReference type="InterPro" id="IPR009080">
    <property type="entry name" value="tRNAsynth_Ia_anticodon-bd"/>
</dbReference>
<dbReference type="NCBIfam" id="TIGR00435">
    <property type="entry name" value="cysS"/>
    <property type="match status" value="1"/>
</dbReference>
<dbReference type="PANTHER" id="PTHR10890:SF3">
    <property type="entry name" value="CYSTEINE--TRNA LIGASE, CYTOPLASMIC"/>
    <property type="match status" value="1"/>
</dbReference>
<dbReference type="PANTHER" id="PTHR10890">
    <property type="entry name" value="CYSTEINYL-TRNA SYNTHETASE"/>
    <property type="match status" value="1"/>
</dbReference>
<dbReference type="Pfam" id="PF01406">
    <property type="entry name" value="tRNA-synt_1e"/>
    <property type="match status" value="1"/>
</dbReference>
<dbReference type="PRINTS" id="PR00983">
    <property type="entry name" value="TRNASYNTHCYS"/>
</dbReference>
<dbReference type="SUPFAM" id="SSF47323">
    <property type="entry name" value="Anticodon-binding domain of a subclass of class I aminoacyl-tRNA synthetases"/>
    <property type="match status" value="1"/>
</dbReference>
<dbReference type="SUPFAM" id="SSF52374">
    <property type="entry name" value="Nucleotidylyl transferase"/>
    <property type="match status" value="1"/>
</dbReference>
<organism>
    <name type="scientific">Gallus gallus</name>
    <name type="common">Chicken</name>
    <dbReference type="NCBI Taxonomy" id="9031"/>
    <lineage>
        <taxon>Eukaryota</taxon>
        <taxon>Metazoa</taxon>
        <taxon>Chordata</taxon>
        <taxon>Craniata</taxon>
        <taxon>Vertebrata</taxon>
        <taxon>Euteleostomi</taxon>
        <taxon>Archelosauria</taxon>
        <taxon>Archosauria</taxon>
        <taxon>Dinosauria</taxon>
        <taxon>Saurischia</taxon>
        <taxon>Theropoda</taxon>
        <taxon>Coelurosauria</taxon>
        <taxon>Aves</taxon>
        <taxon>Neognathae</taxon>
        <taxon>Galloanserae</taxon>
        <taxon>Galliformes</taxon>
        <taxon>Phasianidae</taxon>
        <taxon>Phasianinae</taxon>
        <taxon>Gallus</taxon>
    </lineage>
</organism>
<name>SYCC_CHICK</name>
<evidence type="ECO:0000250" key="1"/>
<evidence type="ECO:0000250" key="2">
    <source>
        <dbReference type="UniProtKB" id="P21888"/>
    </source>
</evidence>
<evidence type="ECO:0000250" key="3">
    <source>
        <dbReference type="UniProtKB" id="P49589"/>
    </source>
</evidence>
<evidence type="ECO:0000256" key="4">
    <source>
        <dbReference type="SAM" id="MobiDB-lite"/>
    </source>
</evidence>
<evidence type="ECO:0000305" key="5"/>
<protein>
    <recommendedName>
        <fullName>Cysteine--tRNA ligase, cytoplasmic</fullName>
        <ecNumber evidence="3">6.1.1.16</ecNumber>
    </recommendedName>
    <alternativeName>
        <fullName>Cysteinyl-tRNA synthetase</fullName>
        <shortName>CysRS</shortName>
    </alternativeName>
</protein>
<proteinExistence type="evidence at transcript level"/>
<keyword id="KW-0030">Aminoacyl-tRNA synthetase</keyword>
<keyword id="KW-0067">ATP-binding</keyword>
<keyword id="KW-0963">Cytoplasm</keyword>
<keyword id="KW-0436">Ligase</keyword>
<keyword id="KW-0479">Metal-binding</keyword>
<keyword id="KW-0547">Nucleotide-binding</keyword>
<keyword id="KW-0648">Protein biosynthesis</keyword>
<keyword id="KW-1185">Reference proteome</keyword>
<keyword id="KW-0862">Zinc</keyword>
<gene>
    <name type="primary">CARS1</name>
    <name type="synonym">CARS</name>
    <name type="ORF">RCJMB04_3o5</name>
</gene>
<sequence>MAAAPAEQGKGKRVQPPWSPPEGTKHSRLCLYNSLTRNKEIFQPQNGKKVTWYCCGPTVYDASHMGHARSYISFDILRRILRDYFKFDVFYCMNITDIDDKIIKRTRQNYLFEQYRKNKSTPAQLLEDVKTASELFSVKLSETTDPDKRQMLEKIQNAVKSAFDPLQEAVQAKLPAEEISRCHEILLEEAKDLLSDWLDSKFGSQVTDNSIFSELPKFWEGEFHKDMEALNVLPPDVLTRVSEYVPEIVAFVKKIVDNGYGYVSNGSVYFDTVKFGSSEKHSYAKLVPEAVGDQKALQEGEGDLSISADRLCEKHSPNDFALWKSSKPGEPSWDSPWGKGRPGWHIECSAMAGSILGESMDIHGGGFDLRFPHHDNELAQSEAYFENDNWVRYFLHTGHLTIAGCKMSKSLKNFITIKDALQKHTARQLRLAFLMHSWKDTLDYSSNTMESAIQYEKFMNEFFLNVKDILRAPTDVTGQFQKWENQEAELNKNFYDKKAAIHEALCDNVDTRSVLEEMRSLVSQSNSYIAAKKSARQMPNRLLLENISCYLTQMLKIFGAIESDDAIGFPVGGNNQNINIESTVMPYLQVLSEFREGVRQIAREKKVTEVLQLSDALRDDILPELGVRFEDHEGLPTVVKLVDKDTLLKEREEKKKIEEEKKRKKEEAARKKQEQEAAKLAKMKIPPHEMFKSEHDKYSKFDENGFPTHDTEGKELSKGQIKKLKKLYETQEKLYKEYLQMVQNGSAN</sequence>